<name>FLGI_XANAC</name>
<evidence type="ECO:0000255" key="1">
    <source>
        <dbReference type="HAMAP-Rule" id="MF_00416"/>
    </source>
</evidence>
<proteinExistence type="inferred from homology"/>
<protein>
    <recommendedName>
        <fullName evidence="1">Flagellar P-ring protein</fullName>
    </recommendedName>
    <alternativeName>
        <fullName evidence="1">Basal body P-ring protein</fullName>
    </alternativeName>
</protein>
<feature type="signal peptide" evidence="1">
    <location>
        <begin position="1"/>
        <end position="26"/>
    </location>
</feature>
<feature type="chain" id="PRO_0000009531" description="Flagellar P-ring protein">
    <location>
        <begin position="27"/>
        <end position="372"/>
    </location>
</feature>
<sequence length="372" mass="37591">MNLSSLPFRLLAAAVALCAIAAPASAERIKDLAQVGGVRGNALVGYGLVVGLDGSGDRTSQAPFTVQSLKNLLGELGVNVPANVNPQLKNVAAVAIHAELPPFAKPGQPIDVTVSSIANAVSLRGGSLLMAPLKGADGQVYAMAQGNLVVGGFGAQGKDGSRVSVNVPSVGRIPNGATVERALPDVFAGTGEITLNLHQNDFTTVSRMVAAIDSSFGAGTARAVDGVTVAVRSPTDPGARIGLLSRLENVELSPGDAPAKVVVNARTGTVVIGQLVRVMPAAIAHGSLTVTISENTNVSQPGAFSGGRTAVTQQSTITATSEGSRMFKFEGGTTLDQIVRAVNEVGAAPGDLVAILEALKQAGALTAELEVI</sequence>
<dbReference type="EMBL" id="AE008923">
    <property type="protein sequence ID" value="AAM36841.1"/>
    <property type="molecule type" value="Genomic_DNA"/>
</dbReference>
<dbReference type="RefSeq" id="WP_005921309.1">
    <property type="nucleotide sequence ID" value="NC_003919.1"/>
</dbReference>
<dbReference type="SMR" id="Q8PL27"/>
<dbReference type="KEGG" id="xac:XAC1979"/>
<dbReference type="eggNOG" id="COG1706">
    <property type="taxonomic scope" value="Bacteria"/>
</dbReference>
<dbReference type="HOGENOM" id="CLU_045235_1_0_6"/>
<dbReference type="Proteomes" id="UP000000576">
    <property type="component" value="Chromosome"/>
</dbReference>
<dbReference type="GO" id="GO:0009428">
    <property type="term" value="C:bacterial-type flagellum basal body, distal rod, P ring"/>
    <property type="evidence" value="ECO:0007669"/>
    <property type="project" value="InterPro"/>
</dbReference>
<dbReference type="GO" id="GO:0030288">
    <property type="term" value="C:outer membrane-bounded periplasmic space"/>
    <property type="evidence" value="ECO:0007669"/>
    <property type="project" value="InterPro"/>
</dbReference>
<dbReference type="GO" id="GO:0005198">
    <property type="term" value="F:structural molecule activity"/>
    <property type="evidence" value="ECO:0007669"/>
    <property type="project" value="InterPro"/>
</dbReference>
<dbReference type="GO" id="GO:0071973">
    <property type="term" value="P:bacterial-type flagellum-dependent cell motility"/>
    <property type="evidence" value="ECO:0007669"/>
    <property type="project" value="InterPro"/>
</dbReference>
<dbReference type="HAMAP" id="MF_00416">
    <property type="entry name" value="FlgI"/>
    <property type="match status" value="1"/>
</dbReference>
<dbReference type="InterPro" id="IPR001782">
    <property type="entry name" value="Flag_FlgI"/>
</dbReference>
<dbReference type="NCBIfam" id="NF003676">
    <property type="entry name" value="PRK05303.1"/>
    <property type="match status" value="1"/>
</dbReference>
<dbReference type="PANTHER" id="PTHR30381">
    <property type="entry name" value="FLAGELLAR P-RING PERIPLASMIC PROTEIN FLGI"/>
    <property type="match status" value="1"/>
</dbReference>
<dbReference type="PANTHER" id="PTHR30381:SF0">
    <property type="entry name" value="FLAGELLAR P-RING PROTEIN"/>
    <property type="match status" value="1"/>
</dbReference>
<dbReference type="Pfam" id="PF02119">
    <property type="entry name" value="FlgI"/>
    <property type="match status" value="1"/>
</dbReference>
<dbReference type="PRINTS" id="PR01010">
    <property type="entry name" value="FLGPRINGFLGI"/>
</dbReference>
<keyword id="KW-0975">Bacterial flagellum</keyword>
<keyword id="KW-0574">Periplasm</keyword>
<keyword id="KW-0732">Signal</keyword>
<comment type="function">
    <text evidence="1">Assembles around the rod to form the L-ring and probably protects the motor/basal body from shearing forces during rotation.</text>
</comment>
<comment type="subunit">
    <text evidence="1">The basal body constitutes a major portion of the flagellar organelle and consists of four rings (L,P,S, and M) mounted on a central rod.</text>
</comment>
<comment type="subcellular location">
    <subcellularLocation>
        <location evidence="1">Periplasm</location>
    </subcellularLocation>
    <subcellularLocation>
        <location evidence="1">Bacterial flagellum basal body</location>
    </subcellularLocation>
</comment>
<comment type="similarity">
    <text evidence="1">Belongs to the FlgI family.</text>
</comment>
<gene>
    <name evidence="1" type="primary">flgI</name>
    <name type="ordered locus">XAC1979</name>
</gene>
<accession>Q8PL27</accession>
<reference key="1">
    <citation type="journal article" date="2002" name="Nature">
        <title>Comparison of the genomes of two Xanthomonas pathogens with differing host specificities.</title>
        <authorList>
            <person name="da Silva A.C.R."/>
            <person name="Ferro J.A."/>
            <person name="Reinach F.C."/>
            <person name="Farah C.S."/>
            <person name="Furlan L.R."/>
            <person name="Quaggio R.B."/>
            <person name="Monteiro-Vitorello C.B."/>
            <person name="Van Sluys M.A."/>
            <person name="Almeida N.F. Jr."/>
            <person name="Alves L.M.C."/>
            <person name="do Amaral A.M."/>
            <person name="Bertolini M.C."/>
            <person name="Camargo L.E.A."/>
            <person name="Camarotte G."/>
            <person name="Cannavan F."/>
            <person name="Cardozo J."/>
            <person name="Chambergo F."/>
            <person name="Ciapina L.P."/>
            <person name="Cicarelli R.M.B."/>
            <person name="Coutinho L.L."/>
            <person name="Cursino-Santos J.R."/>
            <person name="El-Dorry H."/>
            <person name="Faria J.B."/>
            <person name="Ferreira A.J.S."/>
            <person name="Ferreira R.C.C."/>
            <person name="Ferro M.I.T."/>
            <person name="Formighieri E.F."/>
            <person name="Franco M.C."/>
            <person name="Greggio C.C."/>
            <person name="Gruber A."/>
            <person name="Katsuyama A.M."/>
            <person name="Kishi L.T."/>
            <person name="Leite R.P."/>
            <person name="Lemos E.G.M."/>
            <person name="Lemos M.V.F."/>
            <person name="Locali E.C."/>
            <person name="Machado M.A."/>
            <person name="Madeira A.M.B.N."/>
            <person name="Martinez-Rossi N.M."/>
            <person name="Martins E.C."/>
            <person name="Meidanis J."/>
            <person name="Menck C.F.M."/>
            <person name="Miyaki C.Y."/>
            <person name="Moon D.H."/>
            <person name="Moreira L.M."/>
            <person name="Novo M.T.M."/>
            <person name="Okura V.K."/>
            <person name="Oliveira M.C."/>
            <person name="Oliveira V.R."/>
            <person name="Pereira H.A."/>
            <person name="Rossi A."/>
            <person name="Sena J.A.D."/>
            <person name="Silva C."/>
            <person name="de Souza R.F."/>
            <person name="Spinola L.A.F."/>
            <person name="Takita M.A."/>
            <person name="Tamura R.E."/>
            <person name="Teixeira E.C."/>
            <person name="Tezza R.I.D."/>
            <person name="Trindade dos Santos M."/>
            <person name="Truffi D."/>
            <person name="Tsai S.M."/>
            <person name="White F.F."/>
            <person name="Setubal J.C."/>
            <person name="Kitajima J.P."/>
        </authorList>
    </citation>
    <scope>NUCLEOTIDE SEQUENCE [LARGE SCALE GENOMIC DNA]</scope>
    <source>
        <strain>306</strain>
    </source>
</reference>
<organism>
    <name type="scientific">Xanthomonas axonopodis pv. citri (strain 306)</name>
    <dbReference type="NCBI Taxonomy" id="190486"/>
    <lineage>
        <taxon>Bacteria</taxon>
        <taxon>Pseudomonadati</taxon>
        <taxon>Pseudomonadota</taxon>
        <taxon>Gammaproteobacteria</taxon>
        <taxon>Lysobacterales</taxon>
        <taxon>Lysobacteraceae</taxon>
        <taxon>Xanthomonas</taxon>
    </lineage>
</organism>